<feature type="chain" id="PRO_0000074657" description="UPF0298 protein EF_2453">
    <location>
        <begin position="1"/>
        <end position="116"/>
    </location>
</feature>
<sequence>MQAKEEKEFTLQERRCLIVWVYTLKPLKQLRRYGLIHYVSRKMKYVVIYMNEENIESNMEKINQLHFVRSVDKSYRPDVEMNFAEKIGTKAAYQEQEDDGYVVEELSTEIRLAENV</sequence>
<name>Y2453_ENTFA</name>
<organism>
    <name type="scientific">Enterococcus faecalis (strain ATCC 700802 / V583)</name>
    <dbReference type="NCBI Taxonomy" id="226185"/>
    <lineage>
        <taxon>Bacteria</taxon>
        <taxon>Bacillati</taxon>
        <taxon>Bacillota</taxon>
        <taxon>Bacilli</taxon>
        <taxon>Lactobacillales</taxon>
        <taxon>Enterococcaceae</taxon>
        <taxon>Enterococcus</taxon>
    </lineage>
</organism>
<gene>
    <name type="ordered locus">EF_2453</name>
</gene>
<proteinExistence type="inferred from homology"/>
<dbReference type="EMBL" id="AE016830">
    <property type="protein sequence ID" value="AAO82171.1"/>
    <property type="molecule type" value="Genomic_DNA"/>
</dbReference>
<dbReference type="RefSeq" id="NP_816101.1">
    <property type="nucleotide sequence ID" value="NC_004668.1"/>
</dbReference>
<dbReference type="RefSeq" id="WP_002359714.1">
    <property type="nucleotide sequence ID" value="NZ_KE136528.1"/>
</dbReference>
<dbReference type="SMR" id="Q831P7"/>
<dbReference type="STRING" id="226185.EF_2453"/>
<dbReference type="EnsemblBacteria" id="AAO82171">
    <property type="protein sequence ID" value="AAO82171"/>
    <property type="gene ID" value="EF_2453"/>
</dbReference>
<dbReference type="KEGG" id="efa:EF2453"/>
<dbReference type="PATRIC" id="fig|226185.45.peg.1092"/>
<dbReference type="eggNOG" id="COG4471">
    <property type="taxonomic scope" value="Bacteria"/>
</dbReference>
<dbReference type="HOGENOM" id="CLU_159890_0_1_9"/>
<dbReference type="Proteomes" id="UP000001415">
    <property type="component" value="Chromosome"/>
</dbReference>
<dbReference type="GO" id="GO:0005737">
    <property type="term" value="C:cytoplasm"/>
    <property type="evidence" value="ECO:0007669"/>
    <property type="project" value="UniProtKB-SubCell"/>
</dbReference>
<dbReference type="HAMAP" id="MF_01126">
    <property type="entry name" value="UPF0298"/>
    <property type="match status" value="1"/>
</dbReference>
<dbReference type="InterPro" id="IPR016979">
    <property type="entry name" value="DUF2129"/>
</dbReference>
<dbReference type="Pfam" id="PF09902">
    <property type="entry name" value="DUF2129"/>
    <property type="match status" value="1"/>
</dbReference>
<reference key="1">
    <citation type="journal article" date="2003" name="Science">
        <title>Role of mobile DNA in the evolution of vancomycin-resistant Enterococcus faecalis.</title>
        <authorList>
            <person name="Paulsen I.T."/>
            <person name="Banerjei L."/>
            <person name="Myers G.S.A."/>
            <person name="Nelson K.E."/>
            <person name="Seshadri R."/>
            <person name="Read T.D."/>
            <person name="Fouts D.E."/>
            <person name="Eisen J.A."/>
            <person name="Gill S.R."/>
            <person name="Heidelberg J.F."/>
            <person name="Tettelin H."/>
            <person name="Dodson R.J."/>
            <person name="Umayam L.A."/>
            <person name="Brinkac L.M."/>
            <person name="Beanan M.J."/>
            <person name="Daugherty S.C."/>
            <person name="DeBoy R.T."/>
            <person name="Durkin S.A."/>
            <person name="Kolonay J.F."/>
            <person name="Madupu R."/>
            <person name="Nelson W.C."/>
            <person name="Vamathevan J.J."/>
            <person name="Tran B."/>
            <person name="Upton J."/>
            <person name="Hansen T."/>
            <person name="Shetty J."/>
            <person name="Khouri H.M."/>
            <person name="Utterback T.R."/>
            <person name="Radune D."/>
            <person name="Ketchum K.A."/>
            <person name="Dougherty B.A."/>
            <person name="Fraser C.M."/>
        </authorList>
    </citation>
    <scope>NUCLEOTIDE SEQUENCE [LARGE SCALE GENOMIC DNA]</scope>
    <source>
        <strain>ATCC 700802 / V583</strain>
    </source>
</reference>
<keyword id="KW-0963">Cytoplasm</keyword>
<keyword id="KW-1185">Reference proteome</keyword>
<accession>Q831P7</accession>
<comment type="subcellular location">
    <subcellularLocation>
        <location evidence="1">Cytoplasm</location>
    </subcellularLocation>
</comment>
<comment type="similarity">
    <text evidence="1">Belongs to the UPF0298 family.</text>
</comment>
<protein>
    <recommendedName>
        <fullName evidence="1">UPF0298 protein EF_2453</fullName>
    </recommendedName>
</protein>
<evidence type="ECO:0000255" key="1">
    <source>
        <dbReference type="HAMAP-Rule" id="MF_01126"/>
    </source>
</evidence>